<name>GSFB_PENAE</name>
<proteinExistence type="evidence at protein level"/>
<sequence>MASNTSRSAHLAQIITENTANIETYRREQGLPPLSLGPDAPLDVKYPPNVEKCRRAVIDATLELGELATGPVELRLVPGWAIMTMFGVTQFICDFDIARQIPLAGDISYEDLSKAINVAVPVLRQVLRAGMPYHMFYESRPGHVAHTATTKVMASESLISDWTSLYTDVLFPASAGLSKALREEPTASDPSKTGFMVTKGDGESGMYMYFEKHPEEARRFAGVMEAFQKDEAYAVRHLTDSWPSDSQTGKLVDLGGSTGAVAFALAEKFPGLEIVVQDLPGALEAAHVREGKNVSFMPHDFFNEQPVKDADVYMFRWILHNWPDGHVQRILRALVPSLKPGAKVIVFDEIMPPAGTLPLSIERYQRNIDFGMLTLFNSKIRDIVEWKEIITQSDQRFNVTGVRYPENSRLSLIEIVWQP</sequence>
<feature type="chain" id="PRO_0000436721" description="O-methyltransferase gsfB">
    <location>
        <begin position="1"/>
        <end position="419"/>
    </location>
</feature>
<feature type="active site" description="Proton acceptor" evidence="2">
    <location>
        <position position="320"/>
    </location>
</feature>
<feature type="binding site" evidence="1">
    <location>
        <begin position="255"/>
        <end position="256"/>
    </location>
    <ligand>
        <name>S-adenosyl-L-methionine</name>
        <dbReference type="ChEBI" id="CHEBI:59789"/>
    </ligand>
</feature>
<feature type="binding site" evidence="2">
    <location>
        <position position="278"/>
    </location>
    <ligand>
        <name>S-adenosyl-L-methionine</name>
        <dbReference type="ChEBI" id="CHEBI:59789"/>
    </ligand>
</feature>
<feature type="binding site" evidence="1">
    <location>
        <begin position="300"/>
        <end position="301"/>
    </location>
    <ligand>
        <name>S-adenosyl-L-methionine</name>
        <dbReference type="ChEBI" id="CHEBI:59789"/>
    </ligand>
</feature>
<feature type="binding site" evidence="1">
    <location>
        <position position="316"/>
    </location>
    <ligand>
        <name>S-adenosyl-L-methionine</name>
        <dbReference type="ChEBI" id="CHEBI:59789"/>
    </ligand>
</feature>
<dbReference type="EC" id="2.1.1.-" evidence="5"/>
<dbReference type="EMBL" id="GU574478">
    <property type="protein sequence ID" value="ADI24954.1"/>
    <property type="molecule type" value="Genomic_DNA"/>
</dbReference>
<dbReference type="SMR" id="D7PI16"/>
<dbReference type="BioCyc" id="MetaCyc:MONOMER-19268"/>
<dbReference type="UniPathway" id="UPA00213"/>
<dbReference type="GO" id="GO:0008171">
    <property type="term" value="F:O-methyltransferase activity"/>
    <property type="evidence" value="ECO:0007669"/>
    <property type="project" value="InterPro"/>
</dbReference>
<dbReference type="GO" id="GO:0140878">
    <property type="term" value="P:griseofulvin biosynthetic process"/>
    <property type="evidence" value="ECO:0000314"/>
    <property type="project" value="GO_Central"/>
</dbReference>
<dbReference type="GO" id="GO:0032259">
    <property type="term" value="P:methylation"/>
    <property type="evidence" value="ECO:0007669"/>
    <property type="project" value="UniProtKB-KW"/>
</dbReference>
<dbReference type="GO" id="GO:0016114">
    <property type="term" value="P:terpenoid biosynthetic process"/>
    <property type="evidence" value="ECO:0007669"/>
    <property type="project" value="UniProtKB-UniPathway"/>
</dbReference>
<dbReference type="CDD" id="cd02440">
    <property type="entry name" value="AdoMet_MTases"/>
    <property type="match status" value="1"/>
</dbReference>
<dbReference type="Gene3D" id="3.40.50.150">
    <property type="entry name" value="Vaccinia Virus protein VP39"/>
    <property type="match status" value="1"/>
</dbReference>
<dbReference type="Gene3D" id="1.10.10.10">
    <property type="entry name" value="Winged helix-like DNA-binding domain superfamily/Winged helix DNA-binding domain"/>
    <property type="match status" value="1"/>
</dbReference>
<dbReference type="InterPro" id="IPR016461">
    <property type="entry name" value="COMT-like"/>
</dbReference>
<dbReference type="InterPro" id="IPR001077">
    <property type="entry name" value="O_MeTrfase_dom"/>
</dbReference>
<dbReference type="InterPro" id="IPR029063">
    <property type="entry name" value="SAM-dependent_MTases_sf"/>
</dbReference>
<dbReference type="InterPro" id="IPR036388">
    <property type="entry name" value="WH-like_DNA-bd_sf"/>
</dbReference>
<dbReference type="InterPro" id="IPR036390">
    <property type="entry name" value="WH_DNA-bd_sf"/>
</dbReference>
<dbReference type="PANTHER" id="PTHR43712:SF16">
    <property type="entry name" value="O-METHYLTRANSFERASE ELCB"/>
    <property type="match status" value="1"/>
</dbReference>
<dbReference type="PANTHER" id="PTHR43712">
    <property type="entry name" value="PUTATIVE (AFU_ORTHOLOGUE AFUA_4G14580)-RELATED"/>
    <property type="match status" value="1"/>
</dbReference>
<dbReference type="Pfam" id="PF00891">
    <property type="entry name" value="Methyltransf_2"/>
    <property type="match status" value="1"/>
</dbReference>
<dbReference type="SUPFAM" id="SSF53335">
    <property type="entry name" value="S-adenosyl-L-methionine-dependent methyltransferases"/>
    <property type="match status" value="1"/>
</dbReference>
<dbReference type="SUPFAM" id="SSF46785">
    <property type="entry name" value="Winged helix' DNA-binding domain"/>
    <property type="match status" value="1"/>
</dbReference>
<dbReference type="PROSITE" id="PS51683">
    <property type="entry name" value="SAM_OMT_II"/>
    <property type="match status" value="1"/>
</dbReference>
<evidence type="ECO:0000250" key="1">
    <source>
        <dbReference type="UniProtKB" id="O04385"/>
    </source>
</evidence>
<evidence type="ECO:0000255" key="2">
    <source>
        <dbReference type="PROSITE-ProRule" id="PRU01020"/>
    </source>
</evidence>
<evidence type="ECO:0000269" key="3">
    <source>
    </source>
</evidence>
<evidence type="ECO:0000269" key="4">
    <source>
    </source>
</evidence>
<evidence type="ECO:0000269" key="5">
    <source>
    </source>
</evidence>
<evidence type="ECO:0000269" key="6">
    <source>
    </source>
</evidence>
<evidence type="ECO:0000303" key="7">
    <source>
    </source>
</evidence>
<evidence type="ECO:0000305" key="8"/>
<organism>
    <name type="scientific">Penicillium aethiopicum</name>
    <dbReference type="NCBI Taxonomy" id="36650"/>
    <lineage>
        <taxon>Eukaryota</taxon>
        <taxon>Fungi</taxon>
        <taxon>Dikarya</taxon>
        <taxon>Ascomycota</taxon>
        <taxon>Pezizomycotina</taxon>
        <taxon>Eurotiomycetes</taxon>
        <taxon>Eurotiomycetidae</taxon>
        <taxon>Eurotiales</taxon>
        <taxon>Aspergillaceae</taxon>
        <taxon>Penicillium</taxon>
    </lineage>
</organism>
<reference key="1">
    <citation type="journal article" date="2010" name="Chem. Biol.">
        <title>Identification of the viridicatumtoxin and griseofulvin gene clusters from Penicillium aethiopicum.</title>
        <authorList>
            <person name="Chooi Y.H."/>
            <person name="Cacho R."/>
            <person name="Tang Y."/>
        </authorList>
    </citation>
    <scope>NUCLEOTIDE SEQUENCE [GENOMIC DNA]</scope>
    <scope>FUNCTION</scope>
    <scope>DISRUPTION PHENOTYPE</scope>
    <source>
        <strain>IBT 5753</strain>
    </source>
</reference>
<reference key="2">
    <citation type="journal article" date="1958" name="Nature">
        <title>Experimental ringworm in guinea pigs: oral treatment with griseofulvin.</title>
        <authorList>
            <person name="Gentles J.C."/>
        </authorList>
    </citation>
    <scope>BIOTECHNOLOGY</scope>
</reference>
<reference key="3">
    <citation type="journal article" date="1973" name="Nature">
        <title>Griseofulvin inhibits fungal mitosis.</title>
        <authorList>
            <person name="Gull K."/>
            <person name="Trinci A.P."/>
        </authorList>
    </citation>
    <scope>BIOTECHNOLOGY</scope>
</reference>
<reference key="4">
    <citation type="journal article" date="2013" name="ACS Chem. Biol.">
        <title>Complexity generation in fungal polyketide biosynthesis: a spirocycle-forming P450 in the concise pathway to the antifungal drug griseofulvin.</title>
        <authorList>
            <person name="Cacho R.A."/>
            <person name="Chooi Y.H."/>
            <person name="Zhou H."/>
            <person name="Tang Y."/>
        </authorList>
    </citation>
    <scope>FUNCTION</scope>
    <scope>DISRUPTION PHENOTYPE</scope>
    <scope>CATALYTIC ACTIVITY</scope>
</reference>
<comment type="function">
    <text evidence="4 5">O-methyltransferase; part of the gene cluster that mediates the biosynthesis of griseofulvin, an important antifungal drug that has been in use for a long time for treating dermatophyte infections (PubMed:20534346, PubMed:23978092). The first step of the pathway is the formation of the heptaketide backbone by gsfA which is initiated by priming with acetyl-CoA, followed by sequential condensations of 6 malonyl-CoA units (PubMed:20534346, PubMed:23978092). The resulting benzophenone can undergo a spontaneous dehydration to form norlichexanthone (PubMed:23978092). However, the true precursor for the griseofulvin biosynthesis is not norlichexanthone, but the heptaketide benzophenone that is O-methylated at 3-OH by gsfB to produce griseophenone D which is further methylated at 9-OH by gsfC to yield griseophenone C (PubMed:23978092). Griseophenone C is then substrate of halogenase gsfI which is responsible for the regio-specific chlorination at the C13 position to form griseophenone B (PubMed:23978092). The cytochrome P450 gsfF catalyzes the coupling of orcinol and phloroglucinol rings in griseophenone B to form desmethyl-dehydrogriseofulvin A which is further methylated at 5-OH by gsfD to yield dehydrogriseofulvin (PubMed:23978092). Finally, gsfE performs stereospecific reduction of enone 18 of dehydrogriseofulvin to afford the final product griseofulvin (PubMed:23978092).</text>
</comment>
<comment type="catalytic activity">
    <reaction evidence="5">
        <text>2-(2,4-dihydroxy-6-oxidobenzoyl)-5-hydroxy-3-methylbenzenolate + S-adenosyl-L-methionine = griseophenone D + S-adenosyl-L-homocysteine + H(+)</text>
        <dbReference type="Rhea" id="RHEA:73923"/>
        <dbReference type="ChEBI" id="CHEBI:15378"/>
        <dbReference type="ChEBI" id="CHEBI:57856"/>
        <dbReference type="ChEBI" id="CHEBI:59789"/>
        <dbReference type="ChEBI" id="CHEBI:193062"/>
        <dbReference type="ChEBI" id="CHEBI:193064"/>
    </reaction>
    <physiologicalReaction direction="left-to-right" evidence="5">
        <dbReference type="Rhea" id="RHEA:73924"/>
    </physiologicalReaction>
</comment>
<comment type="pathway">
    <text evidence="4 5">Secondary metabolite biosynthesis; terpenoid biosynthesis.</text>
</comment>
<comment type="disruption phenotype">
    <text evidence="5">Impairs the production of griseofulvin, but accumulates the intermediates norlichexanthone, griseophenone E, griseophenone F and desmethyl-dehydrogriseofulvin B (PubMed:23978092).</text>
</comment>
<comment type="biotechnology">
    <text evidence="3 6">Griseofulvin is a spirocyclic fungal natural product used in treatment of fungal dermatophytes (PubMed:13577889, PubMed:4583105).</text>
</comment>
<comment type="similarity">
    <text evidence="8">Belongs to the class I-like SAM-binding methyltransferase superfamily. Cation-independent O-methyltransferase family.</text>
</comment>
<protein>
    <recommendedName>
        <fullName evidence="7">O-methyltransferase gsfB</fullName>
        <ecNumber evidence="5">2.1.1.-</ecNumber>
    </recommendedName>
    <alternativeName>
        <fullName evidence="7">Griseofulvin synthesis protein B</fullName>
    </alternativeName>
</protein>
<keyword id="KW-0489">Methyltransferase</keyword>
<keyword id="KW-0949">S-adenosyl-L-methionine</keyword>
<keyword id="KW-0808">Transferase</keyword>
<accession>D7PI16</accession>
<gene>
    <name evidence="7" type="primary">gsfB</name>
</gene>